<protein>
    <recommendedName>
        <fullName evidence="1">Aspartate 1-decarboxylase</fullName>
        <ecNumber evidence="1">4.1.1.11</ecNumber>
    </recommendedName>
    <alternativeName>
        <fullName evidence="1">Aspartate alpha-decarboxylase</fullName>
    </alternativeName>
    <component>
        <recommendedName>
            <fullName evidence="1">Aspartate 1-decarboxylase beta chain</fullName>
        </recommendedName>
    </component>
    <component>
        <recommendedName>
            <fullName evidence="1">Aspartate 1-decarboxylase alpha chain</fullName>
        </recommendedName>
    </component>
</protein>
<accession>A1A7H7</accession>
<dbReference type="EC" id="4.1.1.11" evidence="1"/>
<dbReference type="EMBL" id="CP000468">
    <property type="protein sequence ID" value="ABI99616.1"/>
    <property type="molecule type" value="Genomic_DNA"/>
</dbReference>
<dbReference type="RefSeq" id="WP_000621515.1">
    <property type="nucleotide sequence ID" value="NZ_CADILS010000047.1"/>
</dbReference>
<dbReference type="SMR" id="A1A7H7"/>
<dbReference type="GeneID" id="93777305"/>
<dbReference type="KEGG" id="ecv:APECO1_1854"/>
<dbReference type="HOGENOM" id="CLU_115305_2_1_6"/>
<dbReference type="UniPathway" id="UPA00028">
    <property type="reaction ID" value="UER00002"/>
</dbReference>
<dbReference type="Proteomes" id="UP000008216">
    <property type="component" value="Chromosome"/>
</dbReference>
<dbReference type="GO" id="GO:0005829">
    <property type="term" value="C:cytosol"/>
    <property type="evidence" value="ECO:0007669"/>
    <property type="project" value="TreeGrafter"/>
</dbReference>
<dbReference type="GO" id="GO:0004068">
    <property type="term" value="F:aspartate 1-decarboxylase activity"/>
    <property type="evidence" value="ECO:0007669"/>
    <property type="project" value="UniProtKB-UniRule"/>
</dbReference>
<dbReference type="GO" id="GO:0006523">
    <property type="term" value="P:alanine biosynthetic process"/>
    <property type="evidence" value="ECO:0007669"/>
    <property type="project" value="InterPro"/>
</dbReference>
<dbReference type="GO" id="GO:0015940">
    <property type="term" value="P:pantothenate biosynthetic process"/>
    <property type="evidence" value="ECO:0007669"/>
    <property type="project" value="UniProtKB-UniRule"/>
</dbReference>
<dbReference type="CDD" id="cd06919">
    <property type="entry name" value="Asp_decarbox"/>
    <property type="match status" value="1"/>
</dbReference>
<dbReference type="FunFam" id="2.40.40.20:FF:000004">
    <property type="entry name" value="Aspartate 1-decarboxylase"/>
    <property type="match status" value="1"/>
</dbReference>
<dbReference type="Gene3D" id="2.40.40.20">
    <property type="match status" value="1"/>
</dbReference>
<dbReference type="HAMAP" id="MF_00446">
    <property type="entry name" value="PanD"/>
    <property type="match status" value="1"/>
</dbReference>
<dbReference type="InterPro" id="IPR009010">
    <property type="entry name" value="Asp_de-COase-like_dom_sf"/>
</dbReference>
<dbReference type="InterPro" id="IPR003190">
    <property type="entry name" value="Asp_decarbox"/>
</dbReference>
<dbReference type="NCBIfam" id="TIGR00223">
    <property type="entry name" value="panD"/>
    <property type="match status" value="1"/>
</dbReference>
<dbReference type="PANTHER" id="PTHR21012">
    <property type="entry name" value="ASPARTATE 1-DECARBOXYLASE"/>
    <property type="match status" value="1"/>
</dbReference>
<dbReference type="PANTHER" id="PTHR21012:SF0">
    <property type="entry name" value="ASPARTATE 1-DECARBOXYLASE"/>
    <property type="match status" value="1"/>
</dbReference>
<dbReference type="Pfam" id="PF02261">
    <property type="entry name" value="Asp_decarbox"/>
    <property type="match status" value="1"/>
</dbReference>
<dbReference type="PIRSF" id="PIRSF006246">
    <property type="entry name" value="Asp_decarbox"/>
    <property type="match status" value="1"/>
</dbReference>
<dbReference type="SUPFAM" id="SSF50692">
    <property type="entry name" value="ADC-like"/>
    <property type="match status" value="1"/>
</dbReference>
<evidence type="ECO:0000255" key="1">
    <source>
        <dbReference type="HAMAP-Rule" id="MF_00446"/>
    </source>
</evidence>
<feature type="chain" id="PRO_0000306969" description="Aspartate 1-decarboxylase beta chain" evidence="1">
    <location>
        <begin position="1"/>
        <end position="24"/>
    </location>
</feature>
<feature type="chain" id="PRO_0000306970" description="Aspartate 1-decarboxylase alpha chain" evidence="1">
    <location>
        <begin position="25"/>
        <end position="126"/>
    </location>
</feature>
<feature type="active site" description="Schiff-base intermediate with substrate; via pyruvic acid" evidence="1">
    <location>
        <position position="25"/>
    </location>
</feature>
<feature type="active site" description="Proton donor" evidence="1">
    <location>
        <position position="58"/>
    </location>
</feature>
<feature type="binding site" evidence="1">
    <location>
        <position position="57"/>
    </location>
    <ligand>
        <name>substrate</name>
    </ligand>
</feature>
<feature type="binding site" evidence="1">
    <location>
        <begin position="73"/>
        <end position="75"/>
    </location>
    <ligand>
        <name>substrate</name>
    </ligand>
</feature>
<feature type="modified residue" description="Pyruvic acid (Ser)" evidence="1">
    <location>
        <position position="25"/>
    </location>
</feature>
<name>PAND_ECOK1</name>
<keyword id="KW-0068">Autocatalytic cleavage</keyword>
<keyword id="KW-0963">Cytoplasm</keyword>
<keyword id="KW-0210">Decarboxylase</keyword>
<keyword id="KW-0456">Lyase</keyword>
<keyword id="KW-0566">Pantothenate biosynthesis</keyword>
<keyword id="KW-0670">Pyruvate</keyword>
<keyword id="KW-1185">Reference proteome</keyword>
<keyword id="KW-0704">Schiff base</keyword>
<keyword id="KW-0865">Zymogen</keyword>
<gene>
    <name evidence="1" type="primary">panD</name>
    <name type="ordered locus">Ecok1_01230</name>
    <name type="ORF">APECO1_1854</name>
</gene>
<comment type="function">
    <text evidence="1">Catalyzes the pyruvoyl-dependent decarboxylation of aspartate to produce beta-alanine.</text>
</comment>
<comment type="catalytic activity">
    <reaction evidence="1">
        <text>L-aspartate + H(+) = beta-alanine + CO2</text>
        <dbReference type="Rhea" id="RHEA:19497"/>
        <dbReference type="ChEBI" id="CHEBI:15378"/>
        <dbReference type="ChEBI" id="CHEBI:16526"/>
        <dbReference type="ChEBI" id="CHEBI:29991"/>
        <dbReference type="ChEBI" id="CHEBI:57966"/>
        <dbReference type="EC" id="4.1.1.11"/>
    </reaction>
</comment>
<comment type="cofactor">
    <cofactor evidence="1">
        <name>pyruvate</name>
        <dbReference type="ChEBI" id="CHEBI:15361"/>
    </cofactor>
    <text evidence="1">Binds 1 pyruvoyl group covalently per subunit.</text>
</comment>
<comment type="pathway">
    <text evidence="1">Cofactor biosynthesis; (R)-pantothenate biosynthesis; beta-alanine from L-aspartate: step 1/1.</text>
</comment>
<comment type="subunit">
    <text evidence="1">Heterooctamer of four alpha and four beta subunits.</text>
</comment>
<comment type="subcellular location">
    <subcellularLocation>
        <location evidence="1">Cytoplasm</location>
    </subcellularLocation>
</comment>
<comment type="PTM">
    <text evidence="1">Is synthesized initially as an inactive proenzyme, which is activated by self-cleavage at a specific serine bond to produce a beta-subunit with a hydroxyl group at its C-terminus and an alpha-subunit with a pyruvoyl group at its N-terminus.</text>
</comment>
<comment type="similarity">
    <text evidence="1">Belongs to the PanD family.</text>
</comment>
<reference key="1">
    <citation type="journal article" date="2007" name="J. Bacteriol.">
        <title>The genome sequence of avian pathogenic Escherichia coli strain O1:K1:H7 shares strong similarities with human extraintestinal pathogenic E. coli genomes.</title>
        <authorList>
            <person name="Johnson T.J."/>
            <person name="Kariyawasam S."/>
            <person name="Wannemuehler Y."/>
            <person name="Mangiamele P."/>
            <person name="Johnson S.J."/>
            <person name="Doetkott C."/>
            <person name="Skyberg J.A."/>
            <person name="Lynne A.M."/>
            <person name="Johnson J.R."/>
            <person name="Nolan L.K."/>
        </authorList>
    </citation>
    <scope>NUCLEOTIDE SEQUENCE [LARGE SCALE GENOMIC DNA]</scope>
</reference>
<sequence>MIRTMLQGKLHRVKVTHADLHYEGSCAIDQDFLDAAGILENEAIDIWNVTNGKRFSTYAIAAERGSRIISVNGAAAHCASVGDIVIIASFVTMPDEEARTWRPNVAYFEGDNEMKRTAKAIPVQVA</sequence>
<proteinExistence type="inferred from homology"/>
<organism>
    <name type="scientific">Escherichia coli O1:K1 / APEC</name>
    <dbReference type="NCBI Taxonomy" id="405955"/>
    <lineage>
        <taxon>Bacteria</taxon>
        <taxon>Pseudomonadati</taxon>
        <taxon>Pseudomonadota</taxon>
        <taxon>Gammaproteobacteria</taxon>
        <taxon>Enterobacterales</taxon>
        <taxon>Enterobacteriaceae</taxon>
        <taxon>Escherichia</taxon>
    </lineage>
</organism>